<protein>
    <recommendedName>
        <fullName>Uricase</fullName>
        <ecNumber>1.7.3.3</ecNumber>
    </recommendedName>
    <alternativeName>
        <fullName>Urate oxidase</fullName>
    </alternativeName>
</protein>
<comment type="function">
    <text>Catalyzes the oxidation of uric acid to 5-hydroxyisourate, which is further processed to form (S)-allantoin.</text>
</comment>
<comment type="catalytic activity">
    <reaction>
        <text>urate + O2 + H2O = 5-hydroxyisourate + H2O2</text>
        <dbReference type="Rhea" id="RHEA:21368"/>
        <dbReference type="ChEBI" id="CHEBI:15377"/>
        <dbReference type="ChEBI" id="CHEBI:15379"/>
        <dbReference type="ChEBI" id="CHEBI:16240"/>
        <dbReference type="ChEBI" id="CHEBI:17775"/>
        <dbReference type="ChEBI" id="CHEBI:18072"/>
        <dbReference type="EC" id="1.7.3.3"/>
    </reaction>
</comment>
<comment type="activity regulation">
    <text>Repressed by 20-hydroxyecdysone.</text>
</comment>
<comment type="pathway">
    <text>Purine metabolism; urate degradation; (S)-allantoin from urate: step 1/3.</text>
</comment>
<comment type="subcellular location">
    <subcellularLocation>
        <location>Peroxisome</location>
    </subcellularLocation>
</comment>
<comment type="tissue specificity">
    <text>Malpighian tubules.</text>
</comment>
<comment type="developmental stage">
    <text>Third instar larvae and adult.</text>
</comment>
<comment type="similarity">
    <text evidence="4">Belongs to the uricase family.</text>
</comment>
<name>URIC_DROVI</name>
<sequence>MFATPLRQLSSLKRSGIAGQEQAQLYEITNKGYGKDAVKVMHINRKGPVHSIQELEVGTHLKLYSNKDYMLGNNSDVVATDSQKNTVYLLAKKHGIESPEKFALILAKHFLSTYAHVEEVHVHVEAYPWQRMTQDVSDNIGKGYCENNCNSRSNGNCQLHNHAFIFTPTAHDYCDVILTRQDPKQTVISGIKGLRVLKTTQSSFVNFVDDEFRTLADQYDRIFSTVVECSWEYSDTESVNFLHAWETVKDIVVRNFAGDPSVGIPSPSVQHTLYLSEKQVLDVLPQVSVVSMTMPNKHYFNFDTKPFQQLVPGENNEVFIPTDKPHGTIYAQLSRKSLKSHL</sequence>
<evidence type="ECO:0000250" key="1">
    <source>
        <dbReference type="UniProtKB" id="D0VWQ1"/>
    </source>
</evidence>
<evidence type="ECO:0000250" key="2">
    <source>
        <dbReference type="UniProtKB" id="Q00511"/>
    </source>
</evidence>
<evidence type="ECO:0000255" key="3"/>
<evidence type="ECO:0000305" key="4"/>
<dbReference type="EC" id="1.7.3.3"/>
<dbReference type="EMBL" id="X57114">
    <property type="protein sequence ID" value="CAA40397.1"/>
    <property type="molecule type" value="Genomic_DNA"/>
</dbReference>
<dbReference type="PIR" id="S29133">
    <property type="entry name" value="S29133"/>
</dbReference>
<dbReference type="SMR" id="P23194"/>
<dbReference type="eggNOG" id="KOG1599">
    <property type="taxonomic scope" value="Eukaryota"/>
</dbReference>
<dbReference type="OrthoDB" id="9992118at2759"/>
<dbReference type="UniPathway" id="UPA00394">
    <property type="reaction ID" value="UER00650"/>
</dbReference>
<dbReference type="GO" id="GO:0005777">
    <property type="term" value="C:peroxisome"/>
    <property type="evidence" value="ECO:0007669"/>
    <property type="project" value="UniProtKB-SubCell"/>
</dbReference>
<dbReference type="GO" id="GO:0004846">
    <property type="term" value="F:urate oxidase activity"/>
    <property type="evidence" value="ECO:0007669"/>
    <property type="project" value="UniProtKB-EC"/>
</dbReference>
<dbReference type="GO" id="GO:0006145">
    <property type="term" value="P:purine nucleobase catabolic process"/>
    <property type="evidence" value="ECO:0007669"/>
    <property type="project" value="TreeGrafter"/>
</dbReference>
<dbReference type="GO" id="GO:0019628">
    <property type="term" value="P:urate catabolic process"/>
    <property type="evidence" value="ECO:0007669"/>
    <property type="project" value="UniProtKB-UniPathway"/>
</dbReference>
<dbReference type="CDD" id="cd00445">
    <property type="entry name" value="Uricase"/>
    <property type="match status" value="1"/>
</dbReference>
<dbReference type="FunFam" id="3.10.270.10:FF:000002">
    <property type="entry name" value="Uricase"/>
    <property type="match status" value="1"/>
</dbReference>
<dbReference type="Gene3D" id="3.10.270.10">
    <property type="entry name" value="Urate Oxidase"/>
    <property type="match status" value="1"/>
</dbReference>
<dbReference type="InterPro" id="IPR002042">
    <property type="entry name" value="Uricase"/>
</dbReference>
<dbReference type="InterPro" id="IPR019842">
    <property type="entry name" value="Uricase_CS"/>
</dbReference>
<dbReference type="NCBIfam" id="TIGR03383">
    <property type="entry name" value="urate_oxi"/>
    <property type="match status" value="1"/>
</dbReference>
<dbReference type="PANTHER" id="PTHR42874">
    <property type="entry name" value="URICASE"/>
    <property type="match status" value="1"/>
</dbReference>
<dbReference type="PANTHER" id="PTHR42874:SF1">
    <property type="entry name" value="URICASE"/>
    <property type="match status" value="1"/>
</dbReference>
<dbReference type="Pfam" id="PF01014">
    <property type="entry name" value="Uricase"/>
    <property type="match status" value="2"/>
</dbReference>
<dbReference type="PIRSF" id="PIRSF000241">
    <property type="entry name" value="Urate_oxidase"/>
    <property type="match status" value="1"/>
</dbReference>
<dbReference type="PRINTS" id="PR00093">
    <property type="entry name" value="URICASE"/>
</dbReference>
<dbReference type="SUPFAM" id="SSF55620">
    <property type="entry name" value="Tetrahydrobiopterin biosynthesis enzymes-like"/>
    <property type="match status" value="2"/>
</dbReference>
<dbReference type="PROSITE" id="PS00366">
    <property type="entry name" value="URICASE"/>
    <property type="match status" value="1"/>
</dbReference>
<proteinExistence type="evidence at transcript level"/>
<organism>
    <name type="scientific">Drosophila virilis</name>
    <name type="common">Fruit fly</name>
    <dbReference type="NCBI Taxonomy" id="7244"/>
    <lineage>
        <taxon>Eukaryota</taxon>
        <taxon>Metazoa</taxon>
        <taxon>Ecdysozoa</taxon>
        <taxon>Arthropoda</taxon>
        <taxon>Hexapoda</taxon>
        <taxon>Insecta</taxon>
        <taxon>Pterygota</taxon>
        <taxon>Neoptera</taxon>
        <taxon>Endopterygota</taxon>
        <taxon>Diptera</taxon>
        <taxon>Brachycera</taxon>
        <taxon>Muscomorpha</taxon>
        <taxon>Ephydroidea</taxon>
        <taxon>Drosophilidae</taxon>
        <taxon>Drosophila</taxon>
    </lineage>
</organism>
<keyword id="KW-0560">Oxidoreductase</keyword>
<keyword id="KW-0576">Peroxisome</keyword>
<keyword id="KW-0659">Purine metabolism</keyword>
<feature type="chain" id="PRO_0000165994" description="Uricase">
    <location>
        <begin position="1"/>
        <end position="342"/>
    </location>
</feature>
<feature type="short sequence motif" description="Microbody targeting signal" evidence="3">
    <location>
        <begin position="340"/>
        <end position="342"/>
    </location>
</feature>
<feature type="active site" description="Charge relay system" evidence="1">
    <location>
        <position position="35"/>
    </location>
</feature>
<feature type="active site" description="Charge relay system" evidence="1">
    <location>
        <position position="80"/>
    </location>
</feature>
<feature type="active site" description="Charge relay system" evidence="1">
    <location>
        <position position="298"/>
    </location>
</feature>
<feature type="binding site" evidence="2">
    <location>
        <position position="80"/>
    </location>
    <ligand>
        <name>urate</name>
        <dbReference type="ChEBI" id="CHEBI:17775"/>
    </ligand>
</feature>
<feature type="binding site" evidence="2">
    <location>
        <position position="81"/>
    </location>
    <ligand>
        <name>urate</name>
        <dbReference type="ChEBI" id="CHEBI:17775"/>
    </ligand>
</feature>
<feature type="binding site" evidence="2">
    <location>
        <position position="204"/>
    </location>
    <ligand>
        <name>urate</name>
        <dbReference type="ChEBI" id="CHEBI:17775"/>
    </ligand>
</feature>
<feature type="binding site" evidence="2">
    <location>
        <position position="221"/>
    </location>
    <ligand>
        <name>urate</name>
        <dbReference type="ChEBI" id="CHEBI:17775"/>
    </ligand>
</feature>
<feature type="binding site" evidence="2">
    <location>
        <position position="269"/>
    </location>
    <ligand>
        <name>urate</name>
        <dbReference type="ChEBI" id="CHEBI:17775"/>
    </ligand>
</feature>
<feature type="binding site" evidence="2">
    <location>
        <position position="270"/>
    </location>
    <ligand>
        <name>urate</name>
        <dbReference type="ChEBI" id="CHEBI:17775"/>
    </ligand>
</feature>
<feature type="binding site" evidence="2">
    <location>
        <position position="296"/>
    </location>
    <ligand>
        <name>urate</name>
        <dbReference type="ChEBI" id="CHEBI:17775"/>
    </ligand>
</feature>
<accession>P23194</accession>
<gene>
    <name type="primary">Uro</name>
    <name type="synonym">UO</name>
</gene>
<reference key="1">
    <citation type="submission" date="1991-01" db="EMBL/GenBank/DDBJ databases">
        <authorList>
            <person name="Wallrath L.L."/>
        </authorList>
    </citation>
    <scope>NUCLEOTIDE SEQUENCE [GENOMIC DNA]</scope>
</reference>